<protein>
    <recommendedName>
        <fullName evidence="1">Small ribosomal subunit protein uS2</fullName>
    </recommendedName>
    <alternativeName>
        <fullName evidence="2">30S ribosomal protein S2</fullName>
    </alternativeName>
</protein>
<name>RS2_STRPC</name>
<proteinExistence type="inferred from homology"/>
<comment type="similarity">
    <text evidence="1">Belongs to the universal ribosomal protein uS2 family.</text>
</comment>
<dbReference type="EMBL" id="CP000259">
    <property type="protein sequence ID" value="ABF32978.1"/>
    <property type="molecule type" value="Genomic_DNA"/>
</dbReference>
<dbReference type="RefSeq" id="WP_002982262.1">
    <property type="nucleotide sequence ID" value="NC_008021.1"/>
</dbReference>
<dbReference type="SMR" id="Q1JJJ5"/>
<dbReference type="GeneID" id="69901552"/>
<dbReference type="KEGG" id="spk:MGAS9429_Spy1791"/>
<dbReference type="HOGENOM" id="CLU_040318_1_2_9"/>
<dbReference type="Proteomes" id="UP000002433">
    <property type="component" value="Chromosome"/>
</dbReference>
<dbReference type="GO" id="GO:0022627">
    <property type="term" value="C:cytosolic small ribosomal subunit"/>
    <property type="evidence" value="ECO:0007669"/>
    <property type="project" value="TreeGrafter"/>
</dbReference>
<dbReference type="GO" id="GO:0003735">
    <property type="term" value="F:structural constituent of ribosome"/>
    <property type="evidence" value="ECO:0007669"/>
    <property type="project" value="InterPro"/>
</dbReference>
<dbReference type="GO" id="GO:0006412">
    <property type="term" value="P:translation"/>
    <property type="evidence" value="ECO:0007669"/>
    <property type="project" value="UniProtKB-UniRule"/>
</dbReference>
<dbReference type="CDD" id="cd01425">
    <property type="entry name" value="RPS2"/>
    <property type="match status" value="1"/>
</dbReference>
<dbReference type="FunFam" id="1.10.287.610:FF:000001">
    <property type="entry name" value="30S ribosomal protein S2"/>
    <property type="match status" value="1"/>
</dbReference>
<dbReference type="Gene3D" id="3.40.50.10490">
    <property type="entry name" value="Glucose-6-phosphate isomerase like protein, domain 1"/>
    <property type="match status" value="1"/>
</dbReference>
<dbReference type="Gene3D" id="1.10.287.610">
    <property type="entry name" value="Helix hairpin bin"/>
    <property type="match status" value="1"/>
</dbReference>
<dbReference type="HAMAP" id="MF_00291_B">
    <property type="entry name" value="Ribosomal_uS2_B"/>
    <property type="match status" value="1"/>
</dbReference>
<dbReference type="InterPro" id="IPR001865">
    <property type="entry name" value="Ribosomal_uS2"/>
</dbReference>
<dbReference type="InterPro" id="IPR005706">
    <property type="entry name" value="Ribosomal_uS2_bac/mit/plastid"/>
</dbReference>
<dbReference type="InterPro" id="IPR018130">
    <property type="entry name" value="Ribosomal_uS2_CS"/>
</dbReference>
<dbReference type="InterPro" id="IPR023591">
    <property type="entry name" value="Ribosomal_uS2_flav_dom_sf"/>
</dbReference>
<dbReference type="NCBIfam" id="TIGR01011">
    <property type="entry name" value="rpsB_bact"/>
    <property type="match status" value="1"/>
</dbReference>
<dbReference type="PANTHER" id="PTHR12534">
    <property type="entry name" value="30S RIBOSOMAL PROTEIN S2 PROKARYOTIC AND ORGANELLAR"/>
    <property type="match status" value="1"/>
</dbReference>
<dbReference type="PANTHER" id="PTHR12534:SF0">
    <property type="entry name" value="SMALL RIBOSOMAL SUBUNIT PROTEIN US2M"/>
    <property type="match status" value="1"/>
</dbReference>
<dbReference type="Pfam" id="PF00318">
    <property type="entry name" value="Ribosomal_S2"/>
    <property type="match status" value="1"/>
</dbReference>
<dbReference type="PRINTS" id="PR00395">
    <property type="entry name" value="RIBOSOMALS2"/>
</dbReference>
<dbReference type="SUPFAM" id="SSF52313">
    <property type="entry name" value="Ribosomal protein S2"/>
    <property type="match status" value="1"/>
</dbReference>
<dbReference type="PROSITE" id="PS00962">
    <property type="entry name" value="RIBOSOMAL_S2_1"/>
    <property type="match status" value="1"/>
</dbReference>
<sequence>MAVISMKQLLEAGVHFGHQTRRWNPKMAKYIFTERNGIHVIDLQQTVKLADQAYEFVRDAAANDAVILFVGTKKQAAEAVADEATRAGQYFINHRWLGGTLTNWGTIQKRIARLKEIKRMEEEGTFDVLPKKEVALLNKQRARLEKFLGGIEDMPRIPDVMYVVDPHKEQIAVKEAKKLGIPVVAMVDTNADPDDIDIIIPANDDAIRAVKLITAKLADAIIEGRQGEDADVAFEADTQADSIEEIVEVVEGDNA</sequence>
<organism>
    <name type="scientific">Streptococcus pyogenes serotype M12 (strain MGAS9429)</name>
    <dbReference type="NCBI Taxonomy" id="370551"/>
    <lineage>
        <taxon>Bacteria</taxon>
        <taxon>Bacillati</taxon>
        <taxon>Bacillota</taxon>
        <taxon>Bacilli</taxon>
        <taxon>Lactobacillales</taxon>
        <taxon>Streptococcaceae</taxon>
        <taxon>Streptococcus</taxon>
    </lineage>
</organism>
<gene>
    <name evidence="1" type="primary">rpsB</name>
    <name type="ordered locus">MGAS9429_Spy1791</name>
</gene>
<feature type="chain" id="PRO_1000004088" description="Small ribosomal subunit protein uS2">
    <location>
        <begin position="1"/>
        <end position="255"/>
    </location>
</feature>
<reference key="1">
    <citation type="journal article" date="2006" name="Proc. Natl. Acad. Sci. U.S.A.">
        <title>Molecular genetic anatomy of inter- and intraserotype variation in the human bacterial pathogen group A Streptococcus.</title>
        <authorList>
            <person name="Beres S.B."/>
            <person name="Richter E.W."/>
            <person name="Nagiec M.J."/>
            <person name="Sumby P."/>
            <person name="Porcella S.F."/>
            <person name="DeLeo F.R."/>
            <person name="Musser J.M."/>
        </authorList>
    </citation>
    <scope>NUCLEOTIDE SEQUENCE [LARGE SCALE GENOMIC DNA]</scope>
    <source>
        <strain>MGAS9429</strain>
    </source>
</reference>
<evidence type="ECO:0000255" key="1">
    <source>
        <dbReference type="HAMAP-Rule" id="MF_00291"/>
    </source>
</evidence>
<evidence type="ECO:0000305" key="2"/>
<accession>Q1JJJ5</accession>
<keyword id="KW-0687">Ribonucleoprotein</keyword>
<keyword id="KW-0689">Ribosomal protein</keyword>